<dbReference type="EMBL" id="BA000031">
    <property type="protein sequence ID" value="BAC59546.1"/>
    <property type="molecule type" value="Genomic_DNA"/>
</dbReference>
<dbReference type="RefSeq" id="NP_797662.1">
    <property type="nucleotide sequence ID" value="NC_004603.1"/>
</dbReference>
<dbReference type="RefSeq" id="WP_005462608.1">
    <property type="nucleotide sequence ID" value="NC_004603.1"/>
</dbReference>
<dbReference type="SMR" id="Q87Q67"/>
<dbReference type="GeneID" id="1188788"/>
<dbReference type="KEGG" id="vpa:VP1283"/>
<dbReference type="PATRIC" id="fig|223926.6.peg.1224"/>
<dbReference type="eggNOG" id="COG0393">
    <property type="taxonomic scope" value="Bacteria"/>
</dbReference>
<dbReference type="HOGENOM" id="CLU_117144_1_2_6"/>
<dbReference type="Proteomes" id="UP000002493">
    <property type="component" value="Chromosome 1"/>
</dbReference>
<dbReference type="Gene3D" id="3.30.110.70">
    <property type="entry name" value="Hypothetical protein apc22750. Chain B"/>
    <property type="match status" value="1"/>
</dbReference>
<dbReference type="HAMAP" id="MF_00338">
    <property type="entry name" value="UPF0145"/>
    <property type="match status" value="1"/>
</dbReference>
<dbReference type="InterPro" id="IPR035439">
    <property type="entry name" value="UPF0145_dom_sf"/>
</dbReference>
<dbReference type="InterPro" id="IPR002765">
    <property type="entry name" value="UPF0145_YbjQ-like"/>
</dbReference>
<dbReference type="PANTHER" id="PTHR34068:SF2">
    <property type="entry name" value="UPF0145 PROTEIN SCO3412"/>
    <property type="match status" value="1"/>
</dbReference>
<dbReference type="PANTHER" id="PTHR34068">
    <property type="entry name" value="UPF0145 PROTEIN YBJQ"/>
    <property type="match status" value="1"/>
</dbReference>
<dbReference type="Pfam" id="PF01906">
    <property type="entry name" value="YbjQ_1"/>
    <property type="match status" value="1"/>
</dbReference>
<dbReference type="SUPFAM" id="SSF117782">
    <property type="entry name" value="YbjQ-like"/>
    <property type="match status" value="1"/>
</dbReference>
<proteinExistence type="inferred from homology"/>
<sequence length="105" mass="11215">MIYTTTDTIPGKEIAEVRGVVTGNVVQSKHIGRDLMAGLKSIVGGEIRGYTEMMTEARDIAIQRMVEQANQKGADAIVGIRFTTSSIVDGSSEILAFGTAVKLVE</sequence>
<name>Y1283_VIBPA</name>
<evidence type="ECO:0000255" key="1">
    <source>
        <dbReference type="HAMAP-Rule" id="MF_00338"/>
    </source>
</evidence>
<feature type="chain" id="PRO_0000138487" description="UPF0145 protein VP1283">
    <location>
        <begin position="1"/>
        <end position="105"/>
    </location>
</feature>
<reference key="1">
    <citation type="journal article" date="2003" name="Lancet">
        <title>Genome sequence of Vibrio parahaemolyticus: a pathogenic mechanism distinct from that of V. cholerae.</title>
        <authorList>
            <person name="Makino K."/>
            <person name="Oshima K."/>
            <person name="Kurokawa K."/>
            <person name="Yokoyama K."/>
            <person name="Uda T."/>
            <person name="Tagomori K."/>
            <person name="Iijima Y."/>
            <person name="Najima M."/>
            <person name="Nakano M."/>
            <person name="Yamashita A."/>
            <person name="Kubota Y."/>
            <person name="Kimura S."/>
            <person name="Yasunaga T."/>
            <person name="Honda T."/>
            <person name="Shinagawa H."/>
            <person name="Hattori M."/>
            <person name="Iida T."/>
        </authorList>
    </citation>
    <scope>NUCLEOTIDE SEQUENCE [LARGE SCALE GENOMIC DNA]</scope>
    <source>
        <strain>RIMD 2210633</strain>
    </source>
</reference>
<gene>
    <name type="ordered locus">VP1283</name>
</gene>
<comment type="similarity">
    <text evidence="1">Belongs to the UPF0145 family.</text>
</comment>
<accession>Q87Q67</accession>
<organism>
    <name type="scientific">Vibrio parahaemolyticus serotype O3:K6 (strain RIMD 2210633)</name>
    <dbReference type="NCBI Taxonomy" id="223926"/>
    <lineage>
        <taxon>Bacteria</taxon>
        <taxon>Pseudomonadati</taxon>
        <taxon>Pseudomonadota</taxon>
        <taxon>Gammaproteobacteria</taxon>
        <taxon>Vibrionales</taxon>
        <taxon>Vibrionaceae</taxon>
        <taxon>Vibrio</taxon>
    </lineage>
</organism>
<protein>
    <recommendedName>
        <fullName evidence="1">UPF0145 protein VP1283</fullName>
    </recommendedName>
</protein>